<dbReference type="EC" id="3.4.-.-" evidence="9"/>
<dbReference type="EMBL" id="AY364634">
    <property type="protein sequence ID" value="AAQ55282.2"/>
    <property type="molecule type" value="mRNA"/>
</dbReference>
<dbReference type="RefSeq" id="NP_908939.2">
    <property type="nucleotide sequence ID" value="NM_184050.2"/>
</dbReference>
<dbReference type="SMR" id="Q6UPR8"/>
<dbReference type="BioGRID" id="266948">
    <property type="interactions" value="1"/>
</dbReference>
<dbReference type="FunCoup" id="Q6UPR8">
    <property type="interactions" value="646"/>
</dbReference>
<dbReference type="STRING" id="10116.ENSRNOP00000021958"/>
<dbReference type="GlyCosmos" id="Q6UPR8">
    <property type="glycosylation" value="2 sites, No reported glycans"/>
</dbReference>
<dbReference type="GlyGen" id="Q6UPR8">
    <property type="glycosylation" value="2 sites"/>
</dbReference>
<dbReference type="PhosphoSitePlus" id="Q6UPR8"/>
<dbReference type="SwissPalm" id="Q6UPR8"/>
<dbReference type="jPOST" id="Q6UPR8"/>
<dbReference type="PaxDb" id="10116-ENSRNOP00000021958"/>
<dbReference type="GeneID" id="373544"/>
<dbReference type="KEGG" id="rno:373544"/>
<dbReference type="UCSC" id="RGD:727831">
    <property type="organism name" value="rat"/>
</dbReference>
<dbReference type="AGR" id="RGD:727831"/>
<dbReference type="CTD" id="79956"/>
<dbReference type="RGD" id="727831">
    <property type="gene designation" value="Ermp1"/>
</dbReference>
<dbReference type="eggNOG" id="KOG2194">
    <property type="taxonomic scope" value="Eukaryota"/>
</dbReference>
<dbReference type="InParanoid" id="Q6UPR8"/>
<dbReference type="PhylomeDB" id="Q6UPR8"/>
<dbReference type="PRO" id="PR:Q6UPR8"/>
<dbReference type="Proteomes" id="UP000002494">
    <property type="component" value="Unplaced"/>
</dbReference>
<dbReference type="GO" id="GO:0005789">
    <property type="term" value="C:endoplasmic reticulum membrane"/>
    <property type="evidence" value="ECO:0007669"/>
    <property type="project" value="UniProtKB-SubCell"/>
</dbReference>
<dbReference type="GO" id="GO:0046872">
    <property type="term" value="F:metal ion binding"/>
    <property type="evidence" value="ECO:0007669"/>
    <property type="project" value="UniProtKB-KW"/>
</dbReference>
<dbReference type="GO" id="GO:0008235">
    <property type="term" value="F:metalloexopeptidase activity"/>
    <property type="evidence" value="ECO:0007669"/>
    <property type="project" value="InterPro"/>
</dbReference>
<dbReference type="GO" id="GO:0034599">
    <property type="term" value="P:cellular response to oxidative stress"/>
    <property type="evidence" value="ECO:0000266"/>
    <property type="project" value="RGD"/>
</dbReference>
<dbReference type="GO" id="GO:0030968">
    <property type="term" value="P:endoplasmic reticulum unfolded protein response"/>
    <property type="evidence" value="ECO:0000266"/>
    <property type="project" value="RGD"/>
</dbReference>
<dbReference type="GO" id="GO:0001541">
    <property type="term" value="P:ovarian follicle development"/>
    <property type="evidence" value="ECO:0000315"/>
    <property type="project" value="RGD"/>
</dbReference>
<dbReference type="GO" id="GO:0006508">
    <property type="term" value="P:proteolysis"/>
    <property type="evidence" value="ECO:0000318"/>
    <property type="project" value="GO_Central"/>
</dbReference>
<dbReference type="CDD" id="cd03875">
    <property type="entry name" value="M28_Fxna_like"/>
    <property type="match status" value="1"/>
</dbReference>
<dbReference type="FunFam" id="3.40.630.10:FF:000008">
    <property type="entry name" value="Endoplasmic reticulum metallopeptidase 1"/>
    <property type="match status" value="1"/>
</dbReference>
<dbReference type="Gene3D" id="3.40.630.10">
    <property type="entry name" value="Zn peptidases"/>
    <property type="match status" value="1"/>
</dbReference>
<dbReference type="InterPro" id="IPR053973">
    <property type="entry name" value="ERMP1-like_C"/>
</dbReference>
<dbReference type="InterPro" id="IPR053974">
    <property type="entry name" value="ERMP1_1-A_TM"/>
</dbReference>
<dbReference type="InterPro" id="IPR048024">
    <property type="entry name" value="Fxna-like_M28_dom"/>
</dbReference>
<dbReference type="InterPro" id="IPR045175">
    <property type="entry name" value="M28_fam"/>
</dbReference>
<dbReference type="InterPro" id="IPR007484">
    <property type="entry name" value="Peptidase_M28"/>
</dbReference>
<dbReference type="PANTHER" id="PTHR12147:SF22">
    <property type="entry name" value="ENDOPLASMIC RETICULUM METALLOPEPTIDASE 1"/>
    <property type="match status" value="1"/>
</dbReference>
<dbReference type="PANTHER" id="PTHR12147">
    <property type="entry name" value="METALLOPEPTIDASE M28 FAMILY MEMBER"/>
    <property type="match status" value="1"/>
</dbReference>
<dbReference type="Pfam" id="PF22249">
    <property type="entry name" value="ERMP1-TM"/>
    <property type="match status" value="1"/>
</dbReference>
<dbReference type="Pfam" id="PF22248">
    <property type="entry name" value="ERMP1_C"/>
    <property type="match status" value="1"/>
</dbReference>
<dbReference type="Pfam" id="PF04389">
    <property type="entry name" value="Peptidase_M28"/>
    <property type="match status" value="1"/>
</dbReference>
<dbReference type="SUPFAM" id="SSF53187">
    <property type="entry name" value="Zn-dependent exopeptidases"/>
    <property type="match status" value="1"/>
</dbReference>
<organism>
    <name type="scientific">Rattus norvegicus</name>
    <name type="common">Rat</name>
    <dbReference type="NCBI Taxonomy" id="10116"/>
    <lineage>
        <taxon>Eukaryota</taxon>
        <taxon>Metazoa</taxon>
        <taxon>Chordata</taxon>
        <taxon>Craniata</taxon>
        <taxon>Vertebrata</taxon>
        <taxon>Euteleostomi</taxon>
        <taxon>Mammalia</taxon>
        <taxon>Eutheria</taxon>
        <taxon>Euarchontoglires</taxon>
        <taxon>Glires</taxon>
        <taxon>Rodentia</taxon>
        <taxon>Myomorpha</taxon>
        <taxon>Muroidea</taxon>
        <taxon>Muridae</taxon>
        <taxon>Murinae</taxon>
        <taxon>Rattus</taxon>
    </lineage>
</organism>
<reference key="1">
    <citation type="journal article" date="2007" name="Development">
        <title>Fxna, a novel gene differentially expressed in the rat ovary at the time of folliculogenesis, is required for normal ovarian histogenesis.</title>
        <authorList>
            <person name="Garcia-Rudaz C."/>
            <person name="Luna F."/>
            <person name="Tapia V."/>
            <person name="Kerr B."/>
            <person name="Colgin L."/>
            <person name="Galimi F."/>
            <person name="Dissen G.A."/>
            <person name="Rawlings N.D."/>
            <person name="Ojeda S.R."/>
        </authorList>
    </citation>
    <scope>NUCLEOTIDE SEQUENCE [MRNA]</scope>
    <scope>FUNCTION</scope>
    <scope>SUBCELLULAR LOCATION</scope>
    <scope>TISSUE SPECIFICITY</scope>
    <scope>DEVELOPMENTAL STAGE</scope>
    <scope>3D-STRUCTURE MODELING OF 104-383</scope>
    <scope>DISULFIDE BONDS</scope>
    <source>
        <strain>Sprague-Dawley</strain>
        <tissue>Ovary</tissue>
    </source>
</reference>
<reference key="2">
    <citation type="journal article" date="2013" name="FEMS Yeast Res.">
        <title>Characterization of an M28 metalloprotease family member residing in the yeast vacuole.</title>
        <authorList>
            <person name="Hecht K.A."/>
            <person name="Wytiaz V.A."/>
            <person name="Ast T."/>
            <person name="Schuldiner M."/>
            <person name="Brodsky J.L."/>
        </authorList>
    </citation>
    <scope>SUBCELLULAR LOCATION</scope>
</reference>
<gene>
    <name evidence="2" type="primary">Ermp1</name>
    <name evidence="8" type="synonym">Fxna</name>
</gene>
<proteinExistence type="evidence at protein level"/>
<accession>Q6UPR8</accession>
<protein>
    <recommendedName>
        <fullName evidence="9">Endoplasmic reticulum metallopeptidase 1</fullName>
        <ecNumber evidence="9">3.4.-.-</ecNumber>
    </recommendedName>
    <alternativeName>
        <fullName evidence="8">Felix-ina</fullName>
    </alternativeName>
</protein>
<keyword id="KW-0007">Acetylation</keyword>
<keyword id="KW-1015">Disulfide bond</keyword>
<keyword id="KW-0256">Endoplasmic reticulum</keyword>
<keyword id="KW-0325">Glycoprotein</keyword>
<keyword id="KW-0378">Hydrolase</keyword>
<keyword id="KW-0472">Membrane</keyword>
<keyword id="KW-0479">Metal-binding</keyword>
<keyword id="KW-0482">Metalloprotease</keyword>
<keyword id="KW-0645">Protease</keyword>
<keyword id="KW-1185">Reference proteome</keyword>
<keyword id="KW-0812">Transmembrane</keyword>
<keyword id="KW-1133">Transmembrane helix</keyword>
<keyword id="KW-0862">Zinc</keyword>
<comment type="function">
    <text evidence="6">Within the ovary, required for the organization of somatic cells and oocytes into discrete follicular structures.</text>
</comment>
<comment type="cofactor">
    <cofactor evidence="1">
        <name>Zn(2+)</name>
        <dbReference type="ChEBI" id="CHEBI:29105"/>
    </cofactor>
    <text evidence="1">Binds 2 Zn(2+) ions per subunit.</text>
</comment>
<comment type="subcellular location">
    <subcellularLocation>
        <location evidence="6 7">Endoplasmic reticulum membrane</location>
        <topology evidence="3">Multi-pass membrane protein</topology>
    </subcellularLocation>
</comment>
<comment type="tissue specificity">
    <text evidence="6">Widely expressed, with highest levels in ovary, kidney, hypothalamus and hippocampus. Within the ovarian follicle, expressed in granulosa cells, but not in oocytes. Present in both preantral and antral follicles, but not in atretic antral follicle.</text>
</comment>
<comment type="developmental stage">
    <text evidence="6">Increasing expression in the ovary between fetal day 21 and postnatal day 2. Expression decreases thereafter to lower levels in adult ovaries.</text>
</comment>
<comment type="similarity">
    <text evidence="9">Belongs to the peptidase M28 family.</text>
</comment>
<evidence type="ECO:0000250" key="1">
    <source>
        <dbReference type="UniProtKB" id="P80561"/>
    </source>
</evidence>
<evidence type="ECO:0000250" key="2">
    <source>
        <dbReference type="UniProtKB" id="Q7Z2K6"/>
    </source>
</evidence>
<evidence type="ECO:0000255" key="3"/>
<evidence type="ECO:0000255" key="4">
    <source>
        <dbReference type="PROSITE-ProRule" id="PRU00498"/>
    </source>
</evidence>
<evidence type="ECO:0000256" key="5">
    <source>
        <dbReference type="SAM" id="MobiDB-lite"/>
    </source>
</evidence>
<evidence type="ECO:0000269" key="6">
    <source>
    </source>
</evidence>
<evidence type="ECO:0000269" key="7">
    <source>
    </source>
</evidence>
<evidence type="ECO:0000303" key="8">
    <source>
    </source>
</evidence>
<evidence type="ECO:0000305" key="9"/>
<feature type="chain" id="PRO_0000259494" description="Endoplasmic reticulum metallopeptidase 1">
    <location>
        <begin position="1"/>
        <end position="898"/>
    </location>
</feature>
<feature type="topological domain" description="Cytoplasmic" evidence="9">
    <location>
        <begin position="1"/>
        <end position="66"/>
    </location>
</feature>
<feature type="transmembrane region" description="Helical; Name=1" evidence="3">
    <location>
        <begin position="67"/>
        <end position="87"/>
    </location>
</feature>
<feature type="topological domain" description="Lumenal" evidence="9">
    <location>
        <begin position="88"/>
        <end position="393"/>
    </location>
</feature>
<feature type="transmembrane region" description="Helical; Name=2" evidence="3">
    <location>
        <begin position="394"/>
        <end position="414"/>
    </location>
</feature>
<feature type="topological domain" description="Cytoplasmic" evidence="9">
    <location>
        <begin position="415"/>
        <end position="451"/>
    </location>
</feature>
<feature type="transmembrane region" description="Helical; Name=3" evidence="3">
    <location>
        <begin position="452"/>
        <end position="472"/>
    </location>
</feature>
<feature type="topological domain" description="Lumenal" evidence="9">
    <location>
        <begin position="473"/>
        <end position="480"/>
    </location>
</feature>
<feature type="transmembrane region" description="Helical; Name=4" evidence="3">
    <location>
        <begin position="481"/>
        <end position="501"/>
    </location>
</feature>
<feature type="topological domain" description="Cytoplasmic" evidence="9">
    <location>
        <begin position="502"/>
        <end position="515"/>
    </location>
</feature>
<feature type="transmembrane region" description="Helical; Name=5" evidence="3">
    <location>
        <begin position="516"/>
        <end position="538"/>
    </location>
</feature>
<feature type="topological domain" description="Lumenal" evidence="9">
    <location>
        <begin position="539"/>
        <end position="542"/>
    </location>
</feature>
<feature type="transmembrane region" description="Helical; Name=6" evidence="3">
    <location>
        <begin position="543"/>
        <end position="562"/>
    </location>
</feature>
<feature type="topological domain" description="Cytoplasmic" evidence="9">
    <location>
        <begin position="563"/>
        <end position="573"/>
    </location>
</feature>
<feature type="transmembrane region" description="Helical; Name=7" evidence="3">
    <location>
        <begin position="574"/>
        <end position="594"/>
    </location>
</feature>
<feature type="topological domain" description="Lumenal" evidence="9">
    <location>
        <begin position="595"/>
        <end position="615"/>
    </location>
</feature>
<feature type="transmembrane region" description="Helical; Name=8" evidence="3">
    <location>
        <begin position="616"/>
        <end position="636"/>
    </location>
</feature>
<feature type="topological domain" description="Cytoplasmic" evidence="9">
    <location>
        <begin position="637"/>
        <end position="645"/>
    </location>
</feature>
<feature type="transmembrane region" description="Helical; Name=9" evidence="3">
    <location>
        <begin position="646"/>
        <end position="666"/>
    </location>
</feature>
<feature type="topological domain" description="Lumenal" evidence="9">
    <location>
        <begin position="667"/>
        <end position="898"/>
    </location>
</feature>
<feature type="region of interest" description="Disordered" evidence="5">
    <location>
        <begin position="1"/>
        <end position="59"/>
    </location>
</feature>
<feature type="compositionally biased region" description="Basic and acidic residues" evidence="5">
    <location>
        <begin position="37"/>
        <end position="57"/>
    </location>
</feature>
<feature type="active site" description="Proton acceptor" evidence="1">
    <location>
        <position position="245"/>
    </location>
</feature>
<feature type="binding site" evidence="1">
    <location>
        <position position="199"/>
    </location>
    <ligand>
        <name>Zn(2+)</name>
        <dbReference type="ChEBI" id="CHEBI:29105"/>
        <label>1</label>
        <note>catalytic</note>
    </ligand>
</feature>
<feature type="binding site" evidence="1">
    <location>
        <position position="211"/>
    </location>
    <ligand>
        <name>Zn(2+)</name>
        <dbReference type="ChEBI" id="CHEBI:29105"/>
        <label>1</label>
        <note>catalytic</note>
    </ligand>
</feature>
<feature type="binding site" evidence="1">
    <location>
        <position position="211"/>
    </location>
    <ligand>
        <name>Zn(2+)</name>
        <dbReference type="ChEBI" id="CHEBI:29105"/>
        <label>2</label>
        <note>catalytic</note>
    </ligand>
</feature>
<feature type="binding site" evidence="1">
    <location>
        <position position="246"/>
    </location>
    <ligand>
        <name>Zn(2+)</name>
        <dbReference type="ChEBI" id="CHEBI:29105"/>
        <label>2</label>
        <note>catalytic</note>
    </ligand>
</feature>
<feature type="binding site" evidence="1">
    <location>
        <position position="272"/>
    </location>
    <ligand>
        <name>Zn(2+)</name>
        <dbReference type="ChEBI" id="CHEBI:29105"/>
        <label>1</label>
        <note>catalytic</note>
    </ligand>
</feature>
<feature type="binding site" evidence="1">
    <location>
        <position position="348"/>
    </location>
    <ligand>
        <name>Zn(2+)</name>
        <dbReference type="ChEBI" id="CHEBI:29105"/>
        <label>2</label>
        <note>catalytic</note>
    </ligand>
</feature>
<feature type="site" description="Transition state stabilizer" evidence="1">
    <location>
        <position position="347"/>
    </location>
</feature>
<feature type="modified residue" description="N-acetylmethionine" evidence="2">
    <location>
        <position position="1"/>
    </location>
</feature>
<feature type="glycosylation site" description="N-linked (GlcNAc...) asparagine" evidence="4">
    <location>
        <position position="176"/>
    </location>
</feature>
<feature type="glycosylation site" description="N-linked (GlcNAc...) asparagine" evidence="4">
    <location>
        <position position="724"/>
    </location>
</feature>
<feature type="disulfide bond" evidence="3">
    <location>
        <begin position="198"/>
        <end position="216"/>
    </location>
</feature>
<sequence length="898" mass="99897">MEWSSESAAVRRHRGTAERREGQAAASHPQREASAQEDARGGGRMRGRTESGGESRGAKTALSEARTALALALYLLALRALVQLSLQRLVLSRTSGLQGEFDARQARVYLEHITAIGPRTTGSAENEILTVQYLLEQITLIEEQSNSLHRISVDVQRPTGSFSIDFLGGFTSYYDNITNVVVKLEPQDGAKYAVLANCHFDSVANSPGASDDAVSCAVMLEVLRVMAASPEPLQHAVVFLFNGAEENVLQASHGFITQHPWASLIRAFINLEAAGVGGKELVFQTGPENPWLVQAYVSAAKHPFASVVAQEVFQSGIIPSDTDFRIYRDFGNIPGIDLAFIENGYIYHTKYDTADRILIDSIQRAGDNILAVLKYLATSDMLASSSEYRHGSMVFFDVLGLLVIAYPSRVGSIINYMVVMAVVLYLGRKLLRPNHSNSNYVRDFLCGLGITFISWFTSLVTVLIIAVFVSLIGQSLSWYNYFYIAVCLYGTATVAKIILIHTLAKRFYYVNASDLYLGELFFDTSLFVHCGFLVALTAQGFCSAFMSAVWVAFPLLTKLCVYKDFKKHGAKGRFIALYLLGMFIPYLYGLYLIWAVFEMFTPILGRSGSEIPPDVVLASILAVCVMILSSYFITFIYLVNSTKKTILTLILVCAVTFLLVCSGAFFPYSSNPDSPKPKRVFLQHVSRTFHNLEGSVVKRDSGIWINGFDYTGMSHVTPHIPEINDTIRAHCEENAPLCGFPWYLPVHFLIRKNWYLPAPEISPRNPAHFRLVSKEKMPWDSIKLTFEATGPSHMSFYVRTHKGSTLSQWSLGNGIPVTSRGGDYFVFYSHGLQASAWQFWIEVQVSEEQPEGMVTVAIAAHYLSGENKRSSQLDALKEKFPDWSFPSAWVSTYSLFVF</sequence>
<name>ERMP1_RAT</name>